<proteinExistence type="inferred from homology"/>
<sequence>MSHQETHGFQTEVKQLLNLMIHSLYSNKEIFLRELVSNAADAADKLRYEALTKDELYEGDGELRVRVSADSEKGTVTIEDNGIGMTRDGVIEHLGTIAKSGTAEFFKNLSGDESKDSQLIGQFGVGFYSAFIVADKVTVRTRAAGHAADEAVQWESAGEGEFTVENIVKESRGTEIILHLREEEKEFASDYRLRSIITKYSDHISVPVEMWQEGTPAQEATEEGGEAIPATEGHWKAMNKATALWTRNKSDVTDEEYQEFYKHISHDFADPLLWSHNRVEGKQEYTSLLYIPSKAPWDLWNRDRKHGLKLFVQRVFVMDDAEQFMPSYLRFVQGLIDSNDLPLNVSREILQDNKITTALRTAVTKRVLGMLEKLAKNDPEKYQTFWAEFGQVLKEGPAEDFANKEKIAGLLRFASTHTNEAAHTVSLSDYVERMKEGQSKIYYIVADSHEAAANSPHLELLRKKGIEVLLMSERIDEWLINHLSEFDGKQLHSVTRGDLELGELEDAAEKEAQEKLETESEGLVKRVKEVLGDKVAEVKVTSRLTDTPACVVAGAGEMSSQMIKLMQAAGQAVTESKPVFELNPEHPLVKRLDTEQDEEVFGQWAELLLQQAQLSEKGSLADPSAFIKLMNKMLLASVK</sequence>
<dbReference type="EMBL" id="CP000606">
    <property type="protein sequence ID" value="ABO24098.1"/>
    <property type="molecule type" value="Genomic_DNA"/>
</dbReference>
<dbReference type="RefSeq" id="WP_011866030.1">
    <property type="nucleotide sequence ID" value="NC_009092.1"/>
</dbReference>
<dbReference type="SMR" id="A3QF50"/>
<dbReference type="STRING" id="323850.Shew_2232"/>
<dbReference type="KEGG" id="slo:Shew_2232"/>
<dbReference type="eggNOG" id="COG0326">
    <property type="taxonomic scope" value="Bacteria"/>
</dbReference>
<dbReference type="HOGENOM" id="CLU_006684_3_0_6"/>
<dbReference type="OrthoDB" id="9802640at2"/>
<dbReference type="Proteomes" id="UP000001558">
    <property type="component" value="Chromosome"/>
</dbReference>
<dbReference type="GO" id="GO:0005737">
    <property type="term" value="C:cytoplasm"/>
    <property type="evidence" value="ECO:0007669"/>
    <property type="project" value="UniProtKB-SubCell"/>
</dbReference>
<dbReference type="GO" id="GO:0005524">
    <property type="term" value="F:ATP binding"/>
    <property type="evidence" value="ECO:0007669"/>
    <property type="project" value="UniProtKB-UniRule"/>
</dbReference>
<dbReference type="GO" id="GO:0016887">
    <property type="term" value="F:ATP hydrolysis activity"/>
    <property type="evidence" value="ECO:0007669"/>
    <property type="project" value="InterPro"/>
</dbReference>
<dbReference type="GO" id="GO:0140662">
    <property type="term" value="F:ATP-dependent protein folding chaperone"/>
    <property type="evidence" value="ECO:0007669"/>
    <property type="project" value="InterPro"/>
</dbReference>
<dbReference type="GO" id="GO:0051082">
    <property type="term" value="F:unfolded protein binding"/>
    <property type="evidence" value="ECO:0007669"/>
    <property type="project" value="UniProtKB-UniRule"/>
</dbReference>
<dbReference type="CDD" id="cd16927">
    <property type="entry name" value="HATPase_Hsp90-like"/>
    <property type="match status" value="1"/>
</dbReference>
<dbReference type="FunFam" id="3.30.230.80:FF:000002">
    <property type="entry name" value="Molecular chaperone HtpG"/>
    <property type="match status" value="1"/>
</dbReference>
<dbReference type="FunFam" id="3.30.565.10:FF:000009">
    <property type="entry name" value="Molecular chaperone HtpG"/>
    <property type="match status" value="1"/>
</dbReference>
<dbReference type="Gene3D" id="3.30.230.80">
    <property type="match status" value="1"/>
</dbReference>
<dbReference type="Gene3D" id="3.40.50.11260">
    <property type="match status" value="1"/>
</dbReference>
<dbReference type="Gene3D" id="1.20.120.790">
    <property type="entry name" value="Heat shock protein 90, C-terminal domain"/>
    <property type="match status" value="1"/>
</dbReference>
<dbReference type="Gene3D" id="3.30.565.10">
    <property type="entry name" value="Histidine kinase-like ATPase, C-terminal domain"/>
    <property type="match status" value="1"/>
</dbReference>
<dbReference type="HAMAP" id="MF_00505">
    <property type="entry name" value="HSP90"/>
    <property type="match status" value="1"/>
</dbReference>
<dbReference type="InterPro" id="IPR036890">
    <property type="entry name" value="HATPase_C_sf"/>
</dbReference>
<dbReference type="InterPro" id="IPR019805">
    <property type="entry name" value="Heat_shock_protein_90_CS"/>
</dbReference>
<dbReference type="InterPro" id="IPR037196">
    <property type="entry name" value="HSP90_C"/>
</dbReference>
<dbReference type="InterPro" id="IPR001404">
    <property type="entry name" value="Hsp90_fam"/>
</dbReference>
<dbReference type="InterPro" id="IPR020575">
    <property type="entry name" value="Hsp90_N"/>
</dbReference>
<dbReference type="InterPro" id="IPR020568">
    <property type="entry name" value="Ribosomal_Su5_D2-typ_SF"/>
</dbReference>
<dbReference type="NCBIfam" id="NF003555">
    <property type="entry name" value="PRK05218.1"/>
    <property type="match status" value="1"/>
</dbReference>
<dbReference type="PANTHER" id="PTHR11528">
    <property type="entry name" value="HEAT SHOCK PROTEIN 90 FAMILY MEMBER"/>
    <property type="match status" value="1"/>
</dbReference>
<dbReference type="Pfam" id="PF13589">
    <property type="entry name" value="HATPase_c_3"/>
    <property type="match status" value="1"/>
</dbReference>
<dbReference type="Pfam" id="PF00183">
    <property type="entry name" value="HSP90"/>
    <property type="match status" value="1"/>
</dbReference>
<dbReference type="PIRSF" id="PIRSF002583">
    <property type="entry name" value="Hsp90"/>
    <property type="match status" value="1"/>
</dbReference>
<dbReference type="PRINTS" id="PR00775">
    <property type="entry name" value="HEATSHOCK90"/>
</dbReference>
<dbReference type="SMART" id="SM00387">
    <property type="entry name" value="HATPase_c"/>
    <property type="match status" value="1"/>
</dbReference>
<dbReference type="SUPFAM" id="SSF55874">
    <property type="entry name" value="ATPase domain of HSP90 chaperone/DNA topoisomerase II/histidine kinase"/>
    <property type="match status" value="1"/>
</dbReference>
<dbReference type="SUPFAM" id="SSF110942">
    <property type="entry name" value="HSP90 C-terminal domain"/>
    <property type="match status" value="1"/>
</dbReference>
<dbReference type="SUPFAM" id="SSF54211">
    <property type="entry name" value="Ribosomal protein S5 domain 2-like"/>
    <property type="match status" value="1"/>
</dbReference>
<dbReference type="PROSITE" id="PS00298">
    <property type="entry name" value="HSP90"/>
    <property type="match status" value="1"/>
</dbReference>
<name>HTPG_SHELP</name>
<comment type="function">
    <text evidence="1">Molecular chaperone. Has ATPase activity.</text>
</comment>
<comment type="subunit">
    <text evidence="1">Homodimer.</text>
</comment>
<comment type="subcellular location">
    <subcellularLocation>
        <location evidence="1">Cytoplasm</location>
    </subcellularLocation>
</comment>
<comment type="similarity">
    <text evidence="1">Belongs to the heat shock protein 90 family.</text>
</comment>
<organism>
    <name type="scientific">Shewanella loihica (strain ATCC BAA-1088 / PV-4)</name>
    <dbReference type="NCBI Taxonomy" id="323850"/>
    <lineage>
        <taxon>Bacteria</taxon>
        <taxon>Pseudomonadati</taxon>
        <taxon>Pseudomonadota</taxon>
        <taxon>Gammaproteobacteria</taxon>
        <taxon>Alteromonadales</taxon>
        <taxon>Shewanellaceae</taxon>
        <taxon>Shewanella</taxon>
    </lineage>
</organism>
<evidence type="ECO:0000255" key="1">
    <source>
        <dbReference type="HAMAP-Rule" id="MF_00505"/>
    </source>
</evidence>
<gene>
    <name evidence="1" type="primary">htpG</name>
    <name type="ordered locus">Shew_2232</name>
</gene>
<reference key="1">
    <citation type="submission" date="2007-03" db="EMBL/GenBank/DDBJ databases">
        <title>Complete sequence of Shewanella loihica PV-4.</title>
        <authorList>
            <consortium name="US DOE Joint Genome Institute"/>
            <person name="Copeland A."/>
            <person name="Lucas S."/>
            <person name="Lapidus A."/>
            <person name="Barry K."/>
            <person name="Detter J.C."/>
            <person name="Glavina del Rio T."/>
            <person name="Hammon N."/>
            <person name="Israni S."/>
            <person name="Dalin E."/>
            <person name="Tice H."/>
            <person name="Pitluck S."/>
            <person name="Chain P."/>
            <person name="Malfatti S."/>
            <person name="Shin M."/>
            <person name="Vergez L."/>
            <person name="Schmutz J."/>
            <person name="Larimer F."/>
            <person name="Land M."/>
            <person name="Hauser L."/>
            <person name="Kyrpides N."/>
            <person name="Mikhailova N."/>
            <person name="Romine M.F."/>
            <person name="Serres G."/>
            <person name="Fredrickson J."/>
            <person name="Tiedje J."/>
            <person name="Richardson P."/>
        </authorList>
    </citation>
    <scope>NUCLEOTIDE SEQUENCE [LARGE SCALE GENOMIC DNA]</scope>
    <source>
        <strain>ATCC BAA-1088 / PV-4</strain>
    </source>
</reference>
<keyword id="KW-0067">ATP-binding</keyword>
<keyword id="KW-0143">Chaperone</keyword>
<keyword id="KW-0963">Cytoplasm</keyword>
<keyword id="KW-0547">Nucleotide-binding</keyword>
<keyword id="KW-1185">Reference proteome</keyword>
<keyword id="KW-0346">Stress response</keyword>
<accession>A3QF50</accession>
<feature type="chain" id="PRO_1000014955" description="Chaperone protein HtpG">
    <location>
        <begin position="1"/>
        <end position="639"/>
    </location>
</feature>
<feature type="region of interest" description="A; substrate-binding" evidence="1">
    <location>
        <begin position="1"/>
        <end position="347"/>
    </location>
</feature>
<feature type="region of interest" description="B" evidence="1">
    <location>
        <begin position="348"/>
        <end position="564"/>
    </location>
</feature>
<feature type="region of interest" description="C" evidence="1">
    <location>
        <begin position="565"/>
        <end position="639"/>
    </location>
</feature>
<protein>
    <recommendedName>
        <fullName evidence="1">Chaperone protein HtpG</fullName>
    </recommendedName>
    <alternativeName>
        <fullName evidence="1">Heat shock protein HtpG</fullName>
    </alternativeName>
    <alternativeName>
        <fullName evidence="1">High temperature protein G</fullName>
    </alternativeName>
</protein>